<reference key="1">
    <citation type="journal article" date="2004" name="Gene">
        <title>Molecular cloning, genomic structure, and expression analysis of the mouse transcriptional intermediary factor 1 gamma gene.</title>
        <authorList>
            <person name="Yan K.P."/>
            <person name="Dolle P."/>
            <person name="Mark M."/>
            <person name="Lerouge T."/>
            <person name="Wendling O."/>
            <person name="Chambon P."/>
            <person name="Losson R."/>
        </authorList>
    </citation>
    <scope>NUCLEOTIDE SEQUENCE [MRNA] (ISOFORM ALPHA)</scope>
</reference>
<reference key="2">
    <citation type="journal article" date="2003" name="DNA Res.">
        <title>Prediction of the coding sequences of mouse homologues of KIAA gene: III. The complete nucleotide sequences of 500 mouse KIAA-homologous cDNAs identified by screening of terminal sequences of cDNA clones randomly sampled from size-fractionated libraries.</title>
        <authorList>
            <person name="Okazaki N."/>
            <person name="Kikuno R."/>
            <person name="Ohara R."/>
            <person name="Inamoto S."/>
            <person name="Koseki H."/>
            <person name="Hiraoka S."/>
            <person name="Saga Y."/>
            <person name="Nagase T."/>
            <person name="Ohara O."/>
            <person name="Koga H."/>
        </authorList>
    </citation>
    <scope>NUCLEOTIDE SEQUENCE [LARGE SCALE MRNA] OF 55-1142 (ISOFORM BETA)</scope>
    <source>
        <tissue>Embryonic tail</tissue>
    </source>
</reference>
<reference key="3">
    <citation type="journal article" date="2001" name="EMBO J.">
        <title>The tripartite motif family identifies cell compartments.</title>
        <authorList>
            <person name="Reymond A."/>
            <person name="Meroni G."/>
            <person name="Fantozzi A."/>
            <person name="Merla G."/>
            <person name="Cairo S."/>
            <person name="Luzi L."/>
            <person name="Riganelli D."/>
            <person name="Zanaria E."/>
            <person name="Messali S."/>
            <person name="Cainarca S."/>
            <person name="Guffanti A."/>
            <person name="Minucci S."/>
            <person name="Pelicci P.G."/>
            <person name="Ballabio A."/>
        </authorList>
    </citation>
    <scope>NUCLEOTIDE SEQUENCE [MRNA] OF 949-1142 (ISOFORM ALPHA)</scope>
</reference>
<reference key="4">
    <citation type="journal article" date="2004" name="PLoS Biol.">
        <title>The zebrafish moonshine gene encodes transcriptional intermediary factor 1 gamma, an essential regulator of hematopoiesis.</title>
        <authorList>
            <person name="Ransom D.G."/>
            <person name="Bahary N."/>
            <person name="Niss K."/>
            <person name="Traver D."/>
            <person name="Burns C."/>
            <person name="Trede N.S."/>
            <person name="Paffett-Lugassy N."/>
            <person name="Saganic W.J."/>
            <person name="Lim C.A."/>
            <person name="Hersey C."/>
            <person name="Zhou Y."/>
            <person name="Barut B.A."/>
            <person name="Lin S."/>
            <person name="Kingsley P.D."/>
            <person name="Palis J."/>
            <person name="Orkin S.H."/>
            <person name="Zon L.I."/>
        </authorList>
    </citation>
    <scope>DEVELOPMENTAL STAGE</scope>
    <scope>SUBCELLULAR LOCATION</scope>
</reference>
<reference key="5">
    <citation type="journal article" date="2006" name="Cell">
        <title>Hematopoiesis controlled by distinct TIF1gamma and Smad4 branches of the TGFbeta pathway.</title>
        <authorList>
            <person name="He W."/>
            <person name="Dorn D.C."/>
            <person name="Erdjument-Bromage H."/>
            <person name="Tempst P."/>
            <person name="Moore M.A."/>
            <person name="Massague J."/>
        </authorList>
    </citation>
    <scope>FUNCTION</scope>
    <scope>SUBCELLULAR LOCATION</scope>
    <scope>DEVELOPMENTAL STAGE</scope>
</reference>
<reference key="6">
    <citation type="journal article" date="2010" name="Cell">
        <title>A tissue-specific atlas of mouse protein phosphorylation and expression.</title>
        <authorList>
            <person name="Huttlin E.L."/>
            <person name="Jedrychowski M.P."/>
            <person name="Elias J.E."/>
            <person name="Goswami T."/>
            <person name="Rad R."/>
            <person name="Beausoleil S.A."/>
            <person name="Villen J."/>
            <person name="Haas W."/>
            <person name="Sowa M.E."/>
            <person name="Gygi S.P."/>
        </authorList>
    </citation>
    <scope>PHOSPHORYLATION [LARGE SCALE ANALYSIS] AT SER-818 AND THR-830</scope>
    <scope>IDENTIFICATION BY MASS SPECTROMETRY [LARGE SCALE ANALYSIS]</scope>
    <source>
        <tissue>Brain</tissue>
        <tissue>Lung</tissue>
        <tissue>Spleen</tissue>
        <tissue>Testis</tissue>
    </source>
</reference>
<reference key="7">
    <citation type="journal article" date="2012" name="Proc. Natl. Acad. Sci. U.S.A.">
        <title>In vivo localization and identification of SUMOylated proteins in the brain of His6-HA-SUMO1 knock-in mice.</title>
        <authorList>
            <person name="Tirard M."/>
            <person name="Hsiao H.H."/>
            <person name="Nikolov M."/>
            <person name="Urlaub H."/>
            <person name="Melchior F."/>
            <person name="Brose N."/>
        </authorList>
    </citation>
    <scope>SUMOYLATION WITH SUMO1</scope>
</reference>
<reference key="8">
    <citation type="journal article" date="2013" name="Mol. Cell">
        <title>SIRT5-mediated lysine desuccinylation impacts diverse metabolic pathways.</title>
        <authorList>
            <person name="Park J."/>
            <person name="Chen Y."/>
            <person name="Tishkoff D.X."/>
            <person name="Peng C."/>
            <person name="Tan M."/>
            <person name="Dai L."/>
            <person name="Xie Z."/>
            <person name="Zhang Y."/>
            <person name="Zwaans B.M."/>
            <person name="Skinner M.E."/>
            <person name="Lombard D.B."/>
            <person name="Zhao Y."/>
        </authorList>
    </citation>
    <scope>ACETYLATION [LARGE SCALE ANALYSIS] AT LYS-778; LYS-784; LYS-808; LYS-966 AND LYS-968</scope>
    <scope>IDENTIFICATION BY MASS SPECTROMETRY [LARGE SCALE ANALYSIS]</scope>
    <source>
        <tissue>Embryonic fibroblast</tissue>
    </source>
</reference>
<reference key="9">
    <citation type="journal article" date="2014" name="Mol. Cell. Proteomics">
        <title>Immunoaffinity enrichment and mass spectrometry analysis of protein methylation.</title>
        <authorList>
            <person name="Guo A."/>
            <person name="Gu H."/>
            <person name="Zhou J."/>
            <person name="Mulhern D."/>
            <person name="Wang Y."/>
            <person name="Lee K.A."/>
            <person name="Yang V."/>
            <person name="Aguiar M."/>
            <person name="Kornhauser J."/>
            <person name="Jia X."/>
            <person name="Ren J."/>
            <person name="Beausoleil S.A."/>
            <person name="Silva J.C."/>
            <person name="Vemulapalli V."/>
            <person name="Bedford M.T."/>
            <person name="Comb M.J."/>
        </authorList>
    </citation>
    <scope>METHYLATION [LARGE SCALE ANALYSIS] AT ARG-531; ARG-593; ARG-607; ARG-614 AND ARG-620</scope>
    <scope>IDENTIFICATION BY MASS SPECTROMETRY [LARGE SCALE ANALYSIS]</scope>
    <source>
        <tissue>Embryo</tissue>
    </source>
</reference>
<proteinExistence type="evidence at protein level"/>
<protein>
    <recommendedName>
        <fullName>E3 ubiquitin-protein ligase TRIM33</fullName>
        <ecNumber>2.3.2.27</ecNumber>
    </recommendedName>
    <alternativeName>
        <fullName>Ectodermin homolog</fullName>
    </alternativeName>
    <alternativeName>
        <fullName evidence="13">RING-type E3 ubiquitin transferase TRIM33</fullName>
    </alternativeName>
    <alternativeName>
        <fullName>Transcription intermediary factor 1-gamma</fullName>
        <shortName>TIF1-gamma</shortName>
    </alternativeName>
    <alternativeName>
        <fullName>Tripartite motif-containing protein 33</fullName>
    </alternativeName>
</protein>
<gene>
    <name type="primary">Trim33</name>
    <name type="synonym">Kiaa1113</name>
</gene>
<sequence length="1142" mass="123843">MAENKGGGEAESGGGGSGSAPVTAGAAGPTAQEAEPPLAAVLVEEEEEEGGRAGAEGGAAGPDDGGVAAASSSSAPAASVPAASVGSAVPGGAASTPAPAAAPAPAPAPAPAPAPAPAPAPAPGSSSGPPLGPPASLLDTCAVCQQSLQSRREAEPKLLPCLHSFCLRCLPEPERQLSVPIPGGSNGDVQQVGVIRCPVCRQECRQIDLVDNYFVKDTSEAPSSSDEKSEQVCTSCEDNASAVGFCVECGEWLCKTCIEAHQRVKFTKDHLIRKKEDVSESVGTSGQRPVFCPVHKQEQLKLFCETCDRLTCRDCQLLEHKEHRYQFLEEAFQNQKGAIENLLAKLLEKKNYVHFAATQVQNRIKEVNETNKRVEQEIKVAIFTLINEINKKGKSLLQQLENVTKERQMKLLQQQNDITGLSRQVKHVMNFTNWAIASGSSTALLYSKRLITFQLRHILKARCDPVPAANGAIRFHCDPTFWAKNVVNLGNLVIESKPAPGYTPNVVVGQVPPGTNHISKTPGQINLAQLRLQHMQQQVYAQKHQQLQQMRLQQPPAPIPTTTATTQQHPRQAAPQMLQQQPPRLISVQTMQRGNMNCGAFQAHQMRLAQNAARIPGIPRHSAPQYSMMQPHLQRQHSNPGHAGPFPVVSAHNPINPTSPTTATMANANRGPTSPSVTAIELIPSVTNPENLPSLPDIPPIQLEDAGSSSLDNLLSRYISGSHLPPQPTSTMNPSPGPSALSPGSSGLSNSHTPVRPPSTSSTGSRGSCGSSGRTAEKSAHSFKSDQVKVKQEPGTEEEICSFSGAVKQEKTEDGRRSACMLSSPESSLTPPLSTNLHLESELDTLTGLENHVKTEPTDISESCKQSGLSNLVNGKSPIRNLMHRSARIGGDGNSKDDDPNEDWCAVCQNGGDLLCCEKCPKVFHLTCHVPTLLSFPSGDWICTFCRDIGKPEVEYDCDNMQHSKKGKTAQGLSPVDQRKCERLLLYLYCHELSIEFQEPVPVSIPNYYKIIKKPMDLSTVKKKLQKKHSQHYQIPDDFVADVRLIFKNCERFNEMMKVVQVYADTQEINLKGDSEVAKAGKAVALYFEDKLSEIYSDRTFTPLPEFEQDEDDGEVTEDSDEDFIQPRRKRLKSDERPVHIK</sequence>
<comment type="function">
    <text evidence="1 10">Acts as an E3 ubiquitin-protein ligase. Promotes SMAD4 ubiquitination, nuclear exclusion and degradation via the ubiquitin proteasome pathway (By similarity). May act as a transcriptional repressor (By similarity). Inhibits the transcriptional response to TGF-beta/BMP signaling cascade (By similarity). Plays a role in the control of cell proliferation (By similarity). Its association with SMAD2 and SMAD3 stimulates erythroid differentiation of hematopoietic stem/progenitor. Monoubiquitinates SMAD4 and acts as an inhibitor of SMAD4-dependent TGF-beta/BMP signaling cascade (Monoubiquitination of SMAD4 hampers its ability to form a stable complex with activated SMAD2/3 resulting in inhibition of TGF-beta/BMP signaling cascade) (By similarity).</text>
</comment>
<comment type="catalytic activity">
    <reaction>
        <text>S-ubiquitinyl-[E2 ubiquitin-conjugating enzyme]-L-cysteine + [acceptor protein]-L-lysine = [E2 ubiquitin-conjugating enzyme]-L-cysteine + N(6)-ubiquitinyl-[acceptor protein]-L-lysine.</text>
        <dbReference type="EC" id="2.3.2.27"/>
    </reaction>
</comment>
<comment type="pathway">
    <text>Protein modification; protein ubiquitination.</text>
</comment>
<comment type="subunit">
    <text evidence="2">Homooligomer and heterooligomer with TRIM24 and TRIM28 family members (By similarity). Interacts with SMAD4 in unstimulated cells (By similarity). Found in a complex with SMAD2 and SMAD3 upon addition of TGF-beta (By similarity). Interacts with SMAD2 and SMAD3 (By similarity). Interacts with SMAD4 under basal and induced conditions and, upon TGF-beta signaling, with activated SMAD2. Forms a ternary complex with SMAD4 and SMAD2 upon TGF-beta signaling (By similarity).</text>
</comment>
<comment type="interaction">
    <interactant intactId="EBI-3043980">
        <id>Q99PP7</id>
    </interactant>
    <interactant intactId="EBI-307947">
        <id>Q64127</id>
        <label>Trim24</label>
    </interactant>
    <organismsDiffer>false</organismsDiffer>
    <experiments>2</experiments>
</comment>
<comment type="subcellular location">
    <subcellularLocation>
        <location evidence="9 10">Nucleus</location>
    </subcellularLocation>
    <text evidence="2 9 10">In discrete nuclear dots resembling nuclear bodies (PubMed:15314655, PubMed:16751102). Localizes to sites of DNA damage (By similarity).</text>
</comment>
<comment type="alternative products">
    <event type="alternative splicing"/>
    <isoform>
        <id>Q99PP7-1</id>
        <name>Alpha</name>
        <sequence type="displayed"/>
    </isoform>
    <isoform>
        <id>Q99PP7-2</id>
        <name>Beta</name>
        <sequence type="described" ref="VSP_012068"/>
    </isoform>
</comment>
<comment type="tissue specificity">
    <text>Ubiquitous with high level in testis.</text>
</comment>
<comment type="developmental stage">
    <text evidence="9 10">Expressed in round hematopoietic cells in yolk sac blood islands at 8.5 dpc. Expressed uniformly at 10.5 dpc. Expressed in the brain, spinal cord, neuroepithelium and in spinal ganglia at 12.5 dpc. Expressed in brain, spinal cord, developing epithelia of the lung, stomach, intestine, outer region of the developing kidney, liver, brown fat tissue, skeletal muscle, developing craniofacial region, thymus, cochlear and pharyngeal epithelia and olfactory and respiratory epithelia at 16.5 dpc.</text>
</comment>
<comment type="PTM">
    <text evidence="11">Sumoylated with SUMO1.</text>
</comment>
<comment type="similarity">
    <text evidence="13">Belongs to the TRIM/RBCC family.</text>
</comment>
<organism>
    <name type="scientific">Mus musculus</name>
    <name type="common">Mouse</name>
    <dbReference type="NCBI Taxonomy" id="10090"/>
    <lineage>
        <taxon>Eukaryota</taxon>
        <taxon>Metazoa</taxon>
        <taxon>Chordata</taxon>
        <taxon>Craniata</taxon>
        <taxon>Vertebrata</taxon>
        <taxon>Euteleostomi</taxon>
        <taxon>Mammalia</taxon>
        <taxon>Eutheria</taxon>
        <taxon>Euarchontoglires</taxon>
        <taxon>Glires</taxon>
        <taxon>Rodentia</taxon>
        <taxon>Myomorpha</taxon>
        <taxon>Muroidea</taxon>
        <taxon>Muridae</taxon>
        <taxon>Murinae</taxon>
        <taxon>Mus</taxon>
        <taxon>Mus</taxon>
    </lineage>
</organism>
<evidence type="ECO:0000250" key="1"/>
<evidence type="ECO:0000250" key="2">
    <source>
        <dbReference type="UniProtKB" id="Q9UPN9"/>
    </source>
</evidence>
<evidence type="ECO:0000255" key="3"/>
<evidence type="ECO:0000255" key="4">
    <source>
        <dbReference type="PROSITE-ProRule" id="PRU00024"/>
    </source>
</evidence>
<evidence type="ECO:0000255" key="5">
    <source>
        <dbReference type="PROSITE-ProRule" id="PRU00035"/>
    </source>
</evidence>
<evidence type="ECO:0000255" key="6">
    <source>
        <dbReference type="PROSITE-ProRule" id="PRU00146"/>
    </source>
</evidence>
<evidence type="ECO:0000255" key="7">
    <source>
        <dbReference type="PROSITE-ProRule" id="PRU00175"/>
    </source>
</evidence>
<evidence type="ECO:0000256" key="8">
    <source>
        <dbReference type="SAM" id="MobiDB-lite"/>
    </source>
</evidence>
<evidence type="ECO:0000269" key="9">
    <source>
    </source>
</evidence>
<evidence type="ECO:0000269" key="10">
    <source>
    </source>
</evidence>
<evidence type="ECO:0000269" key="11">
    <source>
    </source>
</evidence>
<evidence type="ECO:0000303" key="12">
    <source>
    </source>
</evidence>
<evidence type="ECO:0000305" key="13"/>
<evidence type="ECO:0007744" key="14">
    <source>
    </source>
</evidence>
<evidence type="ECO:0007744" key="15">
    <source>
    </source>
</evidence>
<evidence type="ECO:0007744" key="16">
    <source>
    </source>
</evidence>
<dbReference type="EC" id="2.3.2.27"/>
<dbReference type="EMBL" id="AY458590">
    <property type="protein sequence ID" value="AAS10352.1"/>
    <property type="molecule type" value="mRNA"/>
</dbReference>
<dbReference type="EMBL" id="AK129293">
    <property type="protein sequence ID" value="BAC98103.1"/>
    <property type="molecule type" value="mRNA"/>
</dbReference>
<dbReference type="EMBL" id="AF220138">
    <property type="protein sequence ID" value="AAG53511.1"/>
    <property type="molecule type" value="mRNA"/>
</dbReference>
<dbReference type="RefSeq" id="NP_001073299.1">
    <property type="nucleotide sequence ID" value="NM_001079830.2"/>
</dbReference>
<dbReference type="RefSeq" id="NP_444400.2">
    <property type="nucleotide sequence ID" value="NM_053170.3"/>
</dbReference>
<dbReference type="SMR" id="Q99PP7"/>
<dbReference type="BioGRID" id="220448">
    <property type="interactions" value="7"/>
</dbReference>
<dbReference type="CORUM" id="Q99PP7"/>
<dbReference type="DIP" id="DIP-59674N"/>
<dbReference type="FunCoup" id="Q99PP7">
    <property type="interactions" value="5025"/>
</dbReference>
<dbReference type="IntAct" id="Q99PP7">
    <property type="interactions" value="5"/>
</dbReference>
<dbReference type="STRING" id="10090.ENSMUSP00000029444"/>
<dbReference type="GlyGen" id="Q99PP7">
    <property type="glycosylation" value="9 sites, 1 N-linked glycan (1 site), 1 O-linked glycan (5 sites)"/>
</dbReference>
<dbReference type="iPTMnet" id="Q99PP7"/>
<dbReference type="PhosphoSitePlus" id="Q99PP7"/>
<dbReference type="SwissPalm" id="Q99PP7"/>
<dbReference type="jPOST" id="Q99PP7"/>
<dbReference type="PaxDb" id="10090-ENSMUSP00000029444"/>
<dbReference type="ProteomicsDB" id="259318">
    <molecule id="Q99PP7-1"/>
</dbReference>
<dbReference type="ProteomicsDB" id="259319">
    <molecule id="Q99PP7-2"/>
</dbReference>
<dbReference type="Pumba" id="Q99PP7"/>
<dbReference type="DNASU" id="94093"/>
<dbReference type="GeneID" id="94093"/>
<dbReference type="KEGG" id="mmu:94093"/>
<dbReference type="AGR" id="MGI:2137357"/>
<dbReference type="CTD" id="51592"/>
<dbReference type="MGI" id="MGI:2137357">
    <property type="gene designation" value="Trim33"/>
</dbReference>
<dbReference type="eggNOG" id="KOG2177">
    <property type="taxonomic scope" value="Eukaryota"/>
</dbReference>
<dbReference type="InParanoid" id="Q99PP7"/>
<dbReference type="OrthoDB" id="1870062at2759"/>
<dbReference type="PhylomeDB" id="Q99PP7"/>
<dbReference type="Reactome" id="R-MMU-2173795">
    <property type="pathway name" value="Downregulation of SMAD2/3:SMAD4 transcriptional activity"/>
</dbReference>
<dbReference type="UniPathway" id="UPA00143"/>
<dbReference type="BioGRID-ORCS" id="94093">
    <property type="hits" value="14 hits in 84 CRISPR screens"/>
</dbReference>
<dbReference type="ChiTaRS" id="Trim33">
    <property type="organism name" value="mouse"/>
</dbReference>
<dbReference type="PRO" id="PR:Q99PP7"/>
<dbReference type="Proteomes" id="UP000000589">
    <property type="component" value="Unplaced"/>
</dbReference>
<dbReference type="RNAct" id="Q99PP7">
    <property type="molecule type" value="protein"/>
</dbReference>
<dbReference type="GO" id="GO:0005654">
    <property type="term" value="C:nucleoplasm"/>
    <property type="evidence" value="ECO:0000304"/>
    <property type="project" value="Reactome"/>
</dbReference>
<dbReference type="GO" id="GO:0005634">
    <property type="term" value="C:nucleus"/>
    <property type="evidence" value="ECO:0000314"/>
    <property type="project" value="MGI"/>
</dbReference>
<dbReference type="GO" id="GO:0070410">
    <property type="term" value="F:co-SMAD binding"/>
    <property type="evidence" value="ECO:0000250"/>
    <property type="project" value="BHF-UCL"/>
</dbReference>
<dbReference type="GO" id="GO:0003677">
    <property type="term" value="F:DNA binding"/>
    <property type="evidence" value="ECO:0007669"/>
    <property type="project" value="UniProtKB-KW"/>
</dbReference>
<dbReference type="GO" id="GO:1990841">
    <property type="term" value="F:promoter-specific chromatin binding"/>
    <property type="evidence" value="ECO:0000314"/>
    <property type="project" value="MGI"/>
</dbReference>
<dbReference type="GO" id="GO:0070412">
    <property type="term" value="F:R-SMAD binding"/>
    <property type="evidence" value="ECO:0000250"/>
    <property type="project" value="BHF-UCL"/>
</dbReference>
<dbReference type="GO" id="GO:0061630">
    <property type="term" value="F:ubiquitin protein ligase activity"/>
    <property type="evidence" value="ECO:0000314"/>
    <property type="project" value="MGI"/>
</dbReference>
<dbReference type="GO" id="GO:0008270">
    <property type="term" value="F:zinc ion binding"/>
    <property type="evidence" value="ECO:0007669"/>
    <property type="project" value="UniProtKB-KW"/>
</dbReference>
<dbReference type="GO" id="GO:0010467">
    <property type="term" value="P:gene expression"/>
    <property type="evidence" value="ECO:0000315"/>
    <property type="project" value="MGI"/>
</dbReference>
<dbReference type="GO" id="GO:0030514">
    <property type="term" value="P:negative regulation of BMP signaling pathway"/>
    <property type="evidence" value="ECO:0000250"/>
    <property type="project" value="UniProtKB"/>
</dbReference>
<dbReference type="GO" id="GO:0016567">
    <property type="term" value="P:protein ubiquitination"/>
    <property type="evidence" value="ECO:0000250"/>
    <property type="project" value="UniProtKB"/>
</dbReference>
<dbReference type="GO" id="GO:0017015">
    <property type="term" value="P:regulation of transforming growth factor beta receptor signaling pathway"/>
    <property type="evidence" value="ECO:0000250"/>
    <property type="project" value="UniProtKB"/>
</dbReference>
<dbReference type="CDD" id="cd19847">
    <property type="entry name" value="Bbox1_TIF1g_C-VI"/>
    <property type="match status" value="1"/>
</dbReference>
<dbReference type="CDD" id="cd19830">
    <property type="entry name" value="Bbox2_TIF1g_C-VI"/>
    <property type="match status" value="1"/>
</dbReference>
<dbReference type="CDD" id="cd05502">
    <property type="entry name" value="Bromo_tif1_like"/>
    <property type="match status" value="1"/>
</dbReference>
<dbReference type="CDD" id="cd15624">
    <property type="entry name" value="PHD_TIF1gamma"/>
    <property type="match status" value="1"/>
</dbReference>
<dbReference type="CDD" id="cd16766">
    <property type="entry name" value="RING-HC_TIF1gamma"/>
    <property type="match status" value="1"/>
</dbReference>
<dbReference type="FunFam" id="3.30.40.10:FF:000123">
    <property type="entry name" value="E3 ubiquitin-protein ligase TRIM33"/>
    <property type="match status" value="1"/>
</dbReference>
<dbReference type="FunFam" id="3.30.40.10:FF:000246">
    <property type="entry name" value="E3 ubiquitin-protein ligase TRIM33 isoform X2"/>
    <property type="match status" value="1"/>
</dbReference>
<dbReference type="FunFam" id="1.20.920.10:FF:000024">
    <property type="entry name" value="Transcription intermediary factor 1-alpha"/>
    <property type="match status" value="1"/>
</dbReference>
<dbReference type="FunFam" id="3.30.160.60:FF:000074">
    <property type="entry name" value="Tripartite motif containing 66"/>
    <property type="match status" value="1"/>
</dbReference>
<dbReference type="Gene3D" id="1.20.920.10">
    <property type="entry name" value="Bromodomain-like"/>
    <property type="match status" value="1"/>
</dbReference>
<dbReference type="Gene3D" id="3.30.160.60">
    <property type="entry name" value="Classic Zinc Finger"/>
    <property type="match status" value="1"/>
</dbReference>
<dbReference type="Gene3D" id="3.30.40.10">
    <property type="entry name" value="Zinc/RING finger domain, C3HC4 (zinc finger)"/>
    <property type="match status" value="2"/>
</dbReference>
<dbReference type="InterPro" id="IPR003649">
    <property type="entry name" value="Bbox_C"/>
</dbReference>
<dbReference type="InterPro" id="IPR001487">
    <property type="entry name" value="Bromodomain"/>
</dbReference>
<dbReference type="InterPro" id="IPR036427">
    <property type="entry name" value="Bromodomain-like_sf"/>
</dbReference>
<dbReference type="InterPro" id="IPR019786">
    <property type="entry name" value="Zinc_finger_PHD-type_CS"/>
</dbReference>
<dbReference type="InterPro" id="IPR000315">
    <property type="entry name" value="Znf_B-box"/>
</dbReference>
<dbReference type="InterPro" id="IPR011011">
    <property type="entry name" value="Znf_FYVE_PHD"/>
</dbReference>
<dbReference type="InterPro" id="IPR001965">
    <property type="entry name" value="Znf_PHD"/>
</dbReference>
<dbReference type="InterPro" id="IPR019787">
    <property type="entry name" value="Znf_PHD-finger"/>
</dbReference>
<dbReference type="InterPro" id="IPR001841">
    <property type="entry name" value="Znf_RING"/>
</dbReference>
<dbReference type="InterPro" id="IPR013083">
    <property type="entry name" value="Znf_RING/FYVE/PHD"/>
</dbReference>
<dbReference type="InterPro" id="IPR017907">
    <property type="entry name" value="Znf_RING_CS"/>
</dbReference>
<dbReference type="PANTHER" id="PTHR45915:SF3">
    <property type="entry name" value="E3 UBIQUITIN-PROTEIN LIGASE TRIM33"/>
    <property type="match status" value="1"/>
</dbReference>
<dbReference type="PANTHER" id="PTHR45915">
    <property type="entry name" value="TRANSCRIPTION INTERMEDIARY FACTOR"/>
    <property type="match status" value="1"/>
</dbReference>
<dbReference type="Pfam" id="PF00439">
    <property type="entry name" value="Bromodomain"/>
    <property type="match status" value="1"/>
</dbReference>
<dbReference type="Pfam" id="PF00628">
    <property type="entry name" value="PHD"/>
    <property type="match status" value="1"/>
</dbReference>
<dbReference type="Pfam" id="PF00643">
    <property type="entry name" value="zf-B_box"/>
    <property type="match status" value="1"/>
</dbReference>
<dbReference type="PRINTS" id="PR00503">
    <property type="entry name" value="BROMODOMAIN"/>
</dbReference>
<dbReference type="SMART" id="SM00502">
    <property type="entry name" value="BBC"/>
    <property type="match status" value="1"/>
</dbReference>
<dbReference type="SMART" id="SM00336">
    <property type="entry name" value="BBOX"/>
    <property type="match status" value="2"/>
</dbReference>
<dbReference type="SMART" id="SM00297">
    <property type="entry name" value="BROMO"/>
    <property type="match status" value="1"/>
</dbReference>
<dbReference type="SMART" id="SM00249">
    <property type="entry name" value="PHD"/>
    <property type="match status" value="2"/>
</dbReference>
<dbReference type="SMART" id="SM00184">
    <property type="entry name" value="RING"/>
    <property type="match status" value="2"/>
</dbReference>
<dbReference type="SUPFAM" id="SSF57845">
    <property type="entry name" value="B-box zinc-binding domain"/>
    <property type="match status" value="1"/>
</dbReference>
<dbReference type="SUPFAM" id="SSF47370">
    <property type="entry name" value="Bromodomain"/>
    <property type="match status" value="1"/>
</dbReference>
<dbReference type="SUPFAM" id="SSF57903">
    <property type="entry name" value="FYVE/PHD zinc finger"/>
    <property type="match status" value="1"/>
</dbReference>
<dbReference type="SUPFAM" id="SSF57850">
    <property type="entry name" value="RING/U-box"/>
    <property type="match status" value="1"/>
</dbReference>
<dbReference type="PROSITE" id="PS50014">
    <property type="entry name" value="BROMODOMAIN_2"/>
    <property type="match status" value="1"/>
</dbReference>
<dbReference type="PROSITE" id="PS50119">
    <property type="entry name" value="ZF_BBOX"/>
    <property type="match status" value="2"/>
</dbReference>
<dbReference type="PROSITE" id="PS01359">
    <property type="entry name" value="ZF_PHD_1"/>
    <property type="match status" value="1"/>
</dbReference>
<dbReference type="PROSITE" id="PS50016">
    <property type="entry name" value="ZF_PHD_2"/>
    <property type="match status" value="1"/>
</dbReference>
<dbReference type="PROSITE" id="PS00518">
    <property type="entry name" value="ZF_RING_1"/>
    <property type="match status" value="1"/>
</dbReference>
<dbReference type="PROSITE" id="PS50089">
    <property type="entry name" value="ZF_RING_2"/>
    <property type="match status" value="1"/>
</dbReference>
<keyword id="KW-0007">Acetylation</keyword>
<keyword id="KW-0025">Alternative splicing</keyword>
<keyword id="KW-0103">Bromodomain</keyword>
<keyword id="KW-0175">Coiled coil</keyword>
<keyword id="KW-0238">DNA-binding</keyword>
<keyword id="KW-1017">Isopeptide bond</keyword>
<keyword id="KW-0479">Metal-binding</keyword>
<keyword id="KW-0488">Methylation</keyword>
<keyword id="KW-0539">Nucleus</keyword>
<keyword id="KW-0597">Phosphoprotein</keyword>
<keyword id="KW-1185">Reference proteome</keyword>
<keyword id="KW-0677">Repeat</keyword>
<keyword id="KW-0678">Repressor</keyword>
<keyword id="KW-0804">Transcription</keyword>
<keyword id="KW-0805">Transcription regulation</keyword>
<keyword id="KW-0808">Transferase</keyword>
<keyword id="KW-0832">Ubl conjugation</keyword>
<keyword id="KW-0833">Ubl conjugation pathway</keyword>
<keyword id="KW-0862">Zinc</keyword>
<keyword id="KW-0863">Zinc-finger</keyword>
<name>TRI33_MOUSE</name>
<accession>Q99PP7</accession>
<accession>Q6SI71</accession>
<accession>Q6ZPX5</accession>
<feature type="chain" id="PRO_0000056396" description="E3 ubiquitin-protein ligase TRIM33">
    <location>
        <begin position="1"/>
        <end position="1142"/>
    </location>
</feature>
<feature type="domain" description="Bromo" evidence="5">
    <location>
        <begin position="972"/>
        <end position="1095"/>
    </location>
</feature>
<feature type="zinc finger region" description="RING-type" evidence="7">
    <location>
        <begin position="141"/>
        <end position="201"/>
    </location>
</feature>
<feature type="zinc finger region" description="B box-type 1" evidence="4">
    <location>
        <begin position="228"/>
        <end position="275"/>
    </location>
</feature>
<feature type="zinc finger region" description="B box-type 2" evidence="4">
    <location>
        <begin position="287"/>
        <end position="328"/>
    </location>
</feature>
<feature type="zinc finger region" description="PHD-type" evidence="6">
    <location>
        <begin position="902"/>
        <end position="949"/>
    </location>
</feature>
<feature type="region of interest" description="Necessary for E3 ubiquitin-protein ligase activity and repression of SMAD4 signaling and transcriptional repression" evidence="1">
    <location>
        <begin position="1"/>
        <end position="163"/>
    </location>
</feature>
<feature type="region of interest" description="Disordered" evidence="8">
    <location>
        <begin position="1"/>
        <end position="132"/>
    </location>
</feature>
<feature type="region of interest" description="Necessary for oligomerization" evidence="1">
    <location>
        <begin position="315"/>
        <end position="417"/>
    </location>
</feature>
<feature type="region of interest" description="Disordered" evidence="8">
    <location>
        <begin position="657"/>
        <end position="676"/>
    </location>
</feature>
<feature type="region of interest" description="Disordered" evidence="8">
    <location>
        <begin position="688"/>
        <end position="707"/>
    </location>
</feature>
<feature type="region of interest" description="Disordered" evidence="8">
    <location>
        <begin position="718"/>
        <end position="834"/>
    </location>
</feature>
<feature type="region of interest" description="Disordered" evidence="8">
    <location>
        <begin position="1103"/>
        <end position="1142"/>
    </location>
</feature>
<feature type="coiled-coil region" evidence="3">
    <location>
        <begin position="315"/>
        <end position="417"/>
    </location>
</feature>
<feature type="compositionally biased region" description="Gly residues" evidence="8">
    <location>
        <begin position="1"/>
        <end position="18"/>
    </location>
</feature>
<feature type="compositionally biased region" description="Low complexity" evidence="8">
    <location>
        <begin position="19"/>
        <end position="42"/>
    </location>
</feature>
<feature type="compositionally biased region" description="Gly residues" evidence="8">
    <location>
        <begin position="52"/>
        <end position="64"/>
    </location>
</feature>
<feature type="compositionally biased region" description="Low complexity" evidence="8">
    <location>
        <begin position="65"/>
        <end position="99"/>
    </location>
</feature>
<feature type="compositionally biased region" description="Pro residues" evidence="8">
    <location>
        <begin position="100"/>
        <end position="122"/>
    </location>
</feature>
<feature type="compositionally biased region" description="Low complexity" evidence="8">
    <location>
        <begin position="738"/>
        <end position="774"/>
    </location>
</feature>
<feature type="compositionally biased region" description="Basic and acidic residues" evidence="8">
    <location>
        <begin position="775"/>
        <end position="794"/>
    </location>
</feature>
<feature type="compositionally biased region" description="Basic and acidic residues" evidence="8">
    <location>
        <begin position="808"/>
        <end position="817"/>
    </location>
</feature>
<feature type="compositionally biased region" description="Low complexity" evidence="8">
    <location>
        <begin position="822"/>
        <end position="834"/>
    </location>
</feature>
<feature type="compositionally biased region" description="Acidic residues" evidence="8">
    <location>
        <begin position="1107"/>
        <end position="1124"/>
    </location>
</feature>
<feature type="compositionally biased region" description="Basic and acidic residues" evidence="8">
    <location>
        <begin position="1133"/>
        <end position="1142"/>
    </location>
</feature>
<feature type="binding site" evidence="4">
    <location>
        <position position="233"/>
    </location>
    <ligand>
        <name>Zn(2+)</name>
        <dbReference type="ChEBI" id="CHEBI:29105"/>
        <label>1</label>
    </ligand>
</feature>
<feature type="binding site" evidence="4">
    <location>
        <position position="236"/>
    </location>
    <ligand>
        <name>Zn(2+)</name>
        <dbReference type="ChEBI" id="CHEBI:29105"/>
        <label>1</label>
    </ligand>
</feature>
<feature type="binding site" evidence="4">
    <location>
        <position position="257"/>
    </location>
    <ligand>
        <name>Zn(2+)</name>
        <dbReference type="ChEBI" id="CHEBI:29105"/>
        <label>1</label>
    </ligand>
</feature>
<feature type="binding site" evidence="4">
    <location>
        <position position="261"/>
    </location>
    <ligand>
        <name>Zn(2+)</name>
        <dbReference type="ChEBI" id="CHEBI:29105"/>
        <label>1</label>
    </ligand>
</feature>
<feature type="binding site" evidence="4">
    <location>
        <position position="292"/>
    </location>
    <ligand>
        <name>Zn(2+)</name>
        <dbReference type="ChEBI" id="CHEBI:29105"/>
        <label>2</label>
    </ligand>
</feature>
<feature type="binding site" evidence="4">
    <location>
        <position position="295"/>
    </location>
    <ligand>
        <name>Zn(2+)</name>
        <dbReference type="ChEBI" id="CHEBI:29105"/>
        <label>2</label>
    </ligand>
</feature>
<feature type="binding site" evidence="4">
    <location>
        <position position="315"/>
    </location>
    <ligand>
        <name>Zn(2+)</name>
        <dbReference type="ChEBI" id="CHEBI:29105"/>
        <label>2</label>
    </ligand>
</feature>
<feature type="binding site" evidence="4">
    <location>
        <position position="320"/>
    </location>
    <ligand>
        <name>Zn(2+)</name>
        <dbReference type="ChEBI" id="CHEBI:29105"/>
        <label>2</label>
    </ligand>
</feature>
<feature type="modified residue" description="Asymmetric dimethylarginine; alternate" evidence="16">
    <location>
        <position position="531"/>
    </location>
</feature>
<feature type="modified residue" description="Omega-N-methylarginine; alternate" evidence="16">
    <location>
        <position position="531"/>
    </location>
</feature>
<feature type="modified residue" description="Omega-N-methylarginine" evidence="2">
    <location>
        <position position="551"/>
    </location>
</feature>
<feature type="modified residue" description="Asymmetric dimethylarginine" evidence="16">
    <location>
        <position position="593"/>
    </location>
</feature>
<feature type="modified residue" description="Asymmetric dimethylarginine; alternate" evidence="16">
    <location>
        <position position="607"/>
    </location>
</feature>
<feature type="modified residue" description="Omega-N-methylarginine; alternate" evidence="2">
    <location>
        <position position="607"/>
    </location>
</feature>
<feature type="modified residue" description="Asymmetric dimethylarginine" evidence="16">
    <location>
        <position position="614"/>
    </location>
</feature>
<feature type="modified residue" description="Asymmetric dimethylarginine" evidence="16">
    <location>
        <position position="620"/>
    </location>
</feature>
<feature type="modified residue" description="N6-acetyllysine; alternate" evidence="15">
    <location>
        <position position="778"/>
    </location>
</feature>
<feature type="modified residue" description="N6-acetyllysine; alternate" evidence="15">
    <location>
        <position position="784"/>
    </location>
</feature>
<feature type="modified residue" description="N6-acetyllysine; alternate" evidence="15">
    <location>
        <position position="808"/>
    </location>
</feature>
<feature type="modified residue" description="Phosphoserine" evidence="14">
    <location>
        <position position="818"/>
    </location>
</feature>
<feature type="modified residue" description="Phosphothreonine" evidence="14">
    <location>
        <position position="830"/>
    </location>
</feature>
<feature type="modified residue" description="Phosphoserine" evidence="2">
    <location>
        <position position="877"/>
    </location>
</feature>
<feature type="modified residue" description="N6-acetyllysine" evidence="15">
    <location>
        <position position="966"/>
    </location>
</feature>
<feature type="modified residue" description="N6-acetyllysine; alternate" evidence="15">
    <location>
        <position position="968"/>
    </location>
</feature>
<feature type="modified residue" description="Phosphothreonine" evidence="2">
    <location>
        <position position="1066"/>
    </location>
</feature>
<feature type="modified residue" description="Phosphothreonine" evidence="2">
    <location>
        <position position="1117"/>
    </location>
</feature>
<feature type="modified residue" description="Phosphoserine" evidence="2">
    <location>
        <position position="1120"/>
    </location>
</feature>
<feature type="modified residue" description="Phosphoserine" evidence="2">
    <location>
        <position position="1134"/>
    </location>
</feature>
<feature type="cross-link" description="Glycyl lysine isopeptide (Lys-Gly) (interchain with G-Cter in SUMO2)" evidence="2">
    <location>
        <position position="345"/>
    </location>
</feature>
<feature type="cross-link" description="Glycyl lysine isopeptide (Lys-Gly) (interchain with G-Cter in SUMO2)" evidence="2">
    <location>
        <position position="350"/>
    </location>
</feature>
<feature type="cross-link" description="Glycyl lysine isopeptide (Lys-Gly) (interchain with G-Cter in SUMO2)" evidence="2">
    <location>
        <position position="497"/>
    </location>
</feature>
<feature type="cross-link" description="Glycyl lysine isopeptide (Lys-Gly) (interchain with G-Cter in SUMO2)" evidence="2">
    <location>
        <position position="520"/>
    </location>
</feature>
<feature type="cross-link" description="Glycyl lysine isopeptide (Lys-Gly) (interchain with G-Cter in SUMO2)" evidence="2">
    <location>
        <position position="543"/>
    </location>
</feature>
<feature type="cross-link" description="Glycyl lysine isopeptide (Lys-Gly) (interchain with G-Cter in SUMO2); alternate" evidence="2">
    <location>
        <position position="778"/>
    </location>
</feature>
<feature type="cross-link" description="Glycyl lysine isopeptide (Lys-Gly) (interchain with G-Cter in SUMO2); alternate" evidence="2">
    <location>
        <position position="784"/>
    </location>
</feature>
<feature type="cross-link" description="Glycyl lysine isopeptide (Lys-Gly) (interchain with G-Cter in SUMO2)" evidence="2">
    <location>
        <position position="789"/>
    </location>
</feature>
<feature type="cross-link" description="Glycyl lysine isopeptide (Lys-Gly) (interchain with G-Cter in SUMO1); alternate" evidence="2">
    <location>
        <position position="791"/>
    </location>
</feature>
<feature type="cross-link" description="Glycyl lysine isopeptide (Lys-Gly) (interchain with G-Cter in SUMO2); alternate" evidence="2">
    <location>
        <position position="791"/>
    </location>
</feature>
<feature type="cross-link" description="Glycyl lysine isopeptide (Lys-Gly) (interchain with G-Cter in SUMO1); alternate" evidence="2">
    <location>
        <position position="808"/>
    </location>
</feature>
<feature type="cross-link" description="Glycyl lysine isopeptide (Lys-Gly) (interchain with G-Cter in SUMO2); alternate" evidence="2">
    <location>
        <position position="808"/>
    </location>
</feature>
<feature type="cross-link" description="Glycyl lysine isopeptide (Lys-Gly) (interchain with G-Cter in SUMO2)" evidence="2">
    <location>
        <position position="811"/>
    </location>
</feature>
<feature type="cross-link" description="Glycyl lysine isopeptide (Lys-Gly) (interchain with G-Cter in SUMO2)" evidence="2">
    <location>
        <position position="876"/>
    </location>
</feature>
<feature type="cross-link" description="Glycyl lysine isopeptide (Lys-Gly) (interchain with G-Cter in SUMO2); alternate" evidence="2">
    <location>
        <position position="968"/>
    </location>
</feature>
<feature type="cross-link" description="Glycyl lysine isopeptide (Lys-Gly) (interchain with G-Cter in SUMO2)" evidence="2">
    <location>
        <position position="1022"/>
    </location>
</feature>
<feature type="cross-link" description="Glycyl lysine isopeptide (Lys-Gly) (interchain with G-Cter in SUMO2)" evidence="2">
    <location>
        <position position="1058"/>
    </location>
</feature>
<feature type="cross-link" description="Glycyl lysine isopeptide (Lys-Gly) (interchain with G-Cter in SUMO2)" evidence="2">
    <location>
        <position position="1072"/>
    </location>
</feature>
<feature type="cross-link" description="Glycyl lysine isopeptide (Lys-Gly) (interchain with G-Cter in SUMO2)" evidence="2">
    <location>
        <position position="1133"/>
    </location>
</feature>
<feature type="splice variant" id="VSP_012068" description="In isoform Beta." evidence="12">
    <location>
        <begin position="1056"/>
        <end position="1072"/>
    </location>
</feature>
<feature type="sequence conflict" description="In Ref. 3." evidence="13" ref="3">
    <original>IGKP</original>
    <variation>HASA</variation>
    <location>
        <begin position="949"/>
        <end position="952"/>
    </location>
</feature>